<sequence length="132" mass="15107">MAREFKRSDRVAQEIQKEIAVILQREVKDPRIGMVTVSDVEVSSDLAYAKVFVTFLFDNDESAIDAGMKGLEKASPYIRSLLGKAMRLRIVPEIRFIYDRSLIEGMRMSNLVSNVIREDNARHIDDDVSEEK</sequence>
<proteinExistence type="inferred from homology"/>
<evidence type="ECO:0000255" key="1">
    <source>
        <dbReference type="HAMAP-Rule" id="MF_00003"/>
    </source>
</evidence>
<reference key="1">
    <citation type="journal article" date="2001" name="Proc. Natl. Acad. Sci. U.S.A.">
        <title>Complete genomic sequence of Pasteurella multocida Pm70.</title>
        <authorList>
            <person name="May B.J."/>
            <person name="Zhang Q."/>
            <person name="Li L.L."/>
            <person name="Paustian M.L."/>
            <person name="Whittam T.S."/>
            <person name="Kapur V."/>
        </authorList>
    </citation>
    <scope>NUCLEOTIDE SEQUENCE [LARGE SCALE GENOMIC DNA]</scope>
    <source>
        <strain>Pm70</strain>
    </source>
</reference>
<organism>
    <name type="scientific">Pasteurella multocida (strain Pm70)</name>
    <dbReference type="NCBI Taxonomy" id="272843"/>
    <lineage>
        <taxon>Bacteria</taxon>
        <taxon>Pseudomonadati</taxon>
        <taxon>Pseudomonadota</taxon>
        <taxon>Gammaproteobacteria</taxon>
        <taxon>Pasteurellales</taxon>
        <taxon>Pasteurellaceae</taxon>
        <taxon>Pasteurella</taxon>
    </lineage>
</organism>
<feature type="chain" id="PRO_0000102707" description="Ribosome-binding factor A">
    <location>
        <begin position="1"/>
        <end position="132"/>
    </location>
</feature>
<name>RBFA_PASMU</name>
<gene>
    <name evidence="1" type="primary">rbfA</name>
    <name type="ordered locus">PM0757</name>
</gene>
<keyword id="KW-0963">Cytoplasm</keyword>
<keyword id="KW-1185">Reference proteome</keyword>
<keyword id="KW-0690">Ribosome biogenesis</keyword>
<comment type="function">
    <text evidence="1">One of several proteins that assist in the late maturation steps of the functional core of the 30S ribosomal subunit. Associates with free 30S ribosomal subunits (but not with 30S subunits that are part of 70S ribosomes or polysomes). Required for efficient processing of 16S rRNA. May interact with the 5'-terminal helix region of 16S rRNA.</text>
</comment>
<comment type="subunit">
    <text evidence="1">Monomer. Binds 30S ribosomal subunits, but not 50S ribosomal subunits or 70S ribosomes.</text>
</comment>
<comment type="subcellular location">
    <subcellularLocation>
        <location evidence="1">Cytoplasm</location>
    </subcellularLocation>
</comment>
<comment type="similarity">
    <text evidence="1">Belongs to the RbfA family.</text>
</comment>
<protein>
    <recommendedName>
        <fullName evidence="1">Ribosome-binding factor A</fullName>
    </recommendedName>
</protein>
<accession>P57872</accession>
<dbReference type="EMBL" id="AE004439">
    <property type="protein sequence ID" value="AAK02841.1"/>
    <property type="molecule type" value="Genomic_DNA"/>
</dbReference>
<dbReference type="RefSeq" id="WP_005716528.1">
    <property type="nucleotide sequence ID" value="NC_002663.1"/>
</dbReference>
<dbReference type="SMR" id="P57872"/>
<dbReference type="STRING" id="272843.PM0757"/>
<dbReference type="EnsemblBacteria" id="AAK02841">
    <property type="protein sequence ID" value="AAK02841"/>
    <property type="gene ID" value="PM0757"/>
</dbReference>
<dbReference type="GeneID" id="77207815"/>
<dbReference type="KEGG" id="pmu:PM0757"/>
<dbReference type="HOGENOM" id="CLU_089475_5_0_6"/>
<dbReference type="OrthoDB" id="307788at2"/>
<dbReference type="Proteomes" id="UP000000809">
    <property type="component" value="Chromosome"/>
</dbReference>
<dbReference type="GO" id="GO:0005829">
    <property type="term" value="C:cytosol"/>
    <property type="evidence" value="ECO:0007669"/>
    <property type="project" value="TreeGrafter"/>
</dbReference>
<dbReference type="GO" id="GO:0043024">
    <property type="term" value="F:ribosomal small subunit binding"/>
    <property type="evidence" value="ECO:0007669"/>
    <property type="project" value="TreeGrafter"/>
</dbReference>
<dbReference type="GO" id="GO:0030490">
    <property type="term" value="P:maturation of SSU-rRNA"/>
    <property type="evidence" value="ECO:0007669"/>
    <property type="project" value="UniProtKB-UniRule"/>
</dbReference>
<dbReference type="FunFam" id="3.30.300.20:FF:000007">
    <property type="entry name" value="Ribosome-binding factor A"/>
    <property type="match status" value="1"/>
</dbReference>
<dbReference type="Gene3D" id="3.30.300.20">
    <property type="match status" value="1"/>
</dbReference>
<dbReference type="HAMAP" id="MF_00003">
    <property type="entry name" value="RbfA"/>
    <property type="match status" value="1"/>
</dbReference>
<dbReference type="InterPro" id="IPR015946">
    <property type="entry name" value="KH_dom-like_a/b"/>
</dbReference>
<dbReference type="InterPro" id="IPR000238">
    <property type="entry name" value="RbfA"/>
</dbReference>
<dbReference type="InterPro" id="IPR023799">
    <property type="entry name" value="RbfA_dom_sf"/>
</dbReference>
<dbReference type="InterPro" id="IPR020053">
    <property type="entry name" value="Ribosome-bd_factorA_CS"/>
</dbReference>
<dbReference type="NCBIfam" id="TIGR00082">
    <property type="entry name" value="rbfA"/>
    <property type="match status" value="1"/>
</dbReference>
<dbReference type="PANTHER" id="PTHR33515">
    <property type="entry name" value="RIBOSOME-BINDING FACTOR A, CHLOROPLASTIC-RELATED"/>
    <property type="match status" value="1"/>
</dbReference>
<dbReference type="PANTHER" id="PTHR33515:SF1">
    <property type="entry name" value="RIBOSOME-BINDING FACTOR A, CHLOROPLASTIC-RELATED"/>
    <property type="match status" value="1"/>
</dbReference>
<dbReference type="Pfam" id="PF02033">
    <property type="entry name" value="RBFA"/>
    <property type="match status" value="1"/>
</dbReference>
<dbReference type="SUPFAM" id="SSF89919">
    <property type="entry name" value="Ribosome-binding factor A, RbfA"/>
    <property type="match status" value="1"/>
</dbReference>
<dbReference type="PROSITE" id="PS01319">
    <property type="entry name" value="RBFA"/>
    <property type="match status" value="1"/>
</dbReference>